<reference key="1">
    <citation type="journal article" date="2006" name="J. Bacteriol.">
        <title>Living with genome instability: the adaptation of phytoplasmas to diverse environments of their insect and plant hosts.</title>
        <authorList>
            <person name="Bai X."/>
            <person name="Zhang J."/>
            <person name="Ewing A."/>
            <person name="Miller S.A."/>
            <person name="Jancso Radek A."/>
            <person name="Shevchenko D.V."/>
            <person name="Tsukerman K."/>
            <person name="Walunas T."/>
            <person name="Lapidus A."/>
            <person name="Campbell J.W."/>
            <person name="Hogenhout S.A."/>
        </authorList>
    </citation>
    <scope>NUCLEOTIDE SEQUENCE [LARGE SCALE GENOMIC DNA]</scope>
    <source>
        <strain>AYWB</strain>
    </source>
</reference>
<keyword id="KW-0963">Cytoplasm</keyword>
<keyword id="KW-0342">GTP-binding</keyword>
<keyword id="KW-0378">Hydrolase</keyword>
<keyword id="KW-0460">Magnesium</keyword>
<keyword id="KW-0479">Metal-binding</keyword>
<keyword id="KW-0547">Nucleotide-binding</keyword>
<proteinExistence type="inferred from homology"/>
<comment type="function">
    <text evidence="1">An essential GTPase which binds GTP, GDP and possibly (p)ppGpp with moderate affinity, with high nucleotide exchange rates and a fairly low GTP hydrolysis rate. Plays a role in control of the cell cycle, stress response, ribosome biogenesis and in those bacteria that undergo differentiation, in morphogenesis control.</text>
</comment>
<comment type="cofactor">
    <cofactor evidence="1">
        <name>Mg(2+)</name>
        <dbReference type="ChEBI" id="CHEBI:18420"/>
    </cofactor>
</comment>
<comment type="subunit">
    <text evidence="1">Monomer.</text>
</comment>
<comment type="subcellular location">
    <subcellularLocation>
        <location evidence="1">Cytoplasm</location>
    </subcellularLocation>
</comment>
<comment type="similarity">
    <text evidence="1">Belongs to the TRAFAC class OBG-HflX-like GTPase superfamily. OBG GTPase family.</text>
</comment>
<name>OBG_AYWBP</name>
<sequence>MHFVDEAFNEVFAGNGGHGIVAFRREKYVAFGGPAGGNGGNGGSVIFVGDKGENTLLKLKYQKHLKAPHGINGKNKGQNGANAPHLYVKVPLGTVFYTADNKFLGEILYDQQTLVIAKGGKGGKGNKALATFKNQAPSYSEKGDLGESFKIKTELKVLADIGLLGFPSVGKSSLISAISKAQPKVASYPFTTIKPHLGVVEVDGFSFVVADLPGLIENAHLGCGMGIQFLKHIERCRVLVHILSMESSNPYQDFQTLNQELKQYNPQLLLKKQIIVTNKMDLPDSLKKLTLLKQKIKGQPIIPLSLVSFDNLEILKYKMSSFLQNTPLEVNPNNNNDFKLYTLTDNLKTISVIKESDSVFVVSGNQVEIFFHRTDFNNEESVKRFNRILKKIGMEEQLQKKGAKPGDQVKICDRLFDFL</sequence>
<feature type="chain" id="PRO_0000385707" description="GTPase Obg">
    <location>
        <begin position="1"/>
        <end position="419"/>
    </location>
</feature>
<feature type="domain" description="Obg" evidence="3">
    <location>
        <begin position="1"/>
        <end position="158"/>
    </location>
</feature>
<feature type="domain" description="OBG-type G" evidence="1">
    <location>
        <begin position="159"/>
        <end position="324"/>
    </location>
</feature>
<feature type="domain" description="OCT" evidence="2">
    <location>
        <begin position="342"/>
        <end position="419"/>
    </location>
</feature>
<feature type="binding site" evidence="1">
    <location>
        <begin position="165"/>
        <end position="172"/>
    </location>
    <ligand>
        <name>GTP</name>
        <dbReference type="ChEBI" id="CHEBI:37565"/>
    </ligand>
</feature>
<feature type="binding site" evidence="1">
    <location>
        <position position="172"/>
    </location>
    <ligand>
        <name>Mg(2+)</name>
        <dbReference type="ChEBI" id="CHEBI:18420"/>
    </ligand>
</feature>
<feature type="binding site" evidence="1">
    <location>
        <begin position="190"/>
        <end position="194"/>
    </location>
    <ligand>
        <name>GTP</name>
        <dbReference type="ChEBI" id="CHEBI:37565"/>
    </ligand>
</feature>
<feature type="binding site" evidence="1">
    <location>
        <position position="192"/>
    </location>
    <ligand>
        <name>Mg(2+)</name>
        <dbReference type="ChEBI" id="CHEBI:18420"/>
    </ligand>
</feature>
<feature type="binding site" evidence="1">
    <location>
        <begin position="211"/>
        <end position="214"/>
    </location>
    <ligand>
        <name>GTP</name>
        <dbReference type="ChEBI" id="CHEBI:37565"/>
    </ligand>
</feature>
<feature type="binding site" evidence="1">
    <location>
        <begin position="278"/>
        <end position="281"/>
    </location>
    <ligand>
        <name>GTP</name>
        <dbReference type="ChEBI" id="CHEBI:37565"/>
    </ligand>
</feature>
<feature type="binding site" evidence="1">
    <location>
        <begin position="305"/>
        <end position="307"/>
    </location>
    <ligand>
        <name>GTP</name>
        <dbReference type="ChEBI" id="CHEBI:37565"/>
    </ligand>
</feature>
<evidence type="ECO:0000255" key="1">
    <source>
        <dbReference type="HAMAP-Rule" id="MF_01454"/>
    </source>
</evidence>
<evidence type="ECO:0000255" key="2">
    <source>
        <dbReference type="PROSITE-ProRule" id="PRU01229"/>
    </source>
</evidence>
<evidence type="ECO:0000255" key="3">
    <source>
        <dbReference type="PROSITE-ProRule" id="PRU01231"/>
    </source>
</evidence>
<protein>
    <recommendedName>
        <fullName evidence="1">GTPase Obg</fullName>
        <ecNumber evidence="1">3.6.5.-</ecNumber>
    </recommendedName>
    <alternativeName>
        <fullName evidence="1">GTP-binding protein Obg</fullName>
    </alternativeName>
</protein>
<gene>
    <name evidence="1" type="primary">obg</name>
    <name type="ordered locus">AYWB_626</name>
</gene>
<organism>
    <name type="scientific">Aster yellows witches'-broom phytoplasma (strain AYWB)</name>
    <dbReference type="NCBI Taxonomy" id="322098"/>
    <lineage>
        <taxon>Bacteria</taxon>
        <taxon>Bacillati</taxon>
        <taxon>Mycoplasmatota</taxon>
        <taxon>Mollicutes</taxon>
        <taxon>Acholeplasmatales</taxon>
        <taxon>Acholeplasmataceae</taxon>
        <taxon>Candidatus Phytoplasma</taxon>
        <taxon>16SrI (Aster yellows group)</taxon>
    </lineage>
</organism>
<accession>Q2NIK0</accession>
<dbReference type="EC" id="3.6.5.-" evidence="1"/>
<dbReference type="EMBL" id="CP000061">
    <property type="protein sequence ID" value="ABC65743.1"/>
    <property type="molecule type" value="Genomic_DNA"/>
</dbReference>
<dbReference type="SMR" id="Q2NIK0"/>
<dbReference type="STRING" id="322098.AYWB_626"/>
<dbReference type="KEGG" id="ayw:AYWB_626"/>
<dbReference type="eggNOG" id="COG0536">
    <property type="taxonomic scope" value="Bacteria"/>
</dbReference>
<dbReference type="HOGENOM" id="CLU_011747_2_1_14"/>
<dbReference type="OrthoDB" id="9807318at2"/>
<dbReference type="PhylomeDB" id="Q2NIK0"/>
<dbReference type="Proteomes" id="UP000001934">
    <property type="component" value="Chromosome"/>
</dbReference>
<dbReference type="GO" id="GO:0005737">
    <property type="term" value="C:cytoplasm"/>
    <property type="evidence" value="ECO:0007669"/>
    <property type="project" value="UniProtKB-SubCell"/>
</dbReference>
<dbReference type="GO" id="GO:0005525">
    <property type="term" value="F:GTP binding"/>
    <property type="evidence" value="ECO:0007669"/>
    <property type="project" value="UniProtKB-UniRule"/>
</dbReference>
<dbReference type="GO" id="GO:0003924">
    <property type="term" value="F:GTPase activity"/>
    <property type="evidence" value="ECO:0007669"/>
    <property type="project" value="UniProtKB-UniRule"/>
</dbReference>
<dbReference type="GO" id="GO:0000287">
    <property type="term" value="F:magnesium ion binding"/>
    <property type="evidence" value="ECO:0007669"/>
    <property type="project" value="InterPro"/>
</dbReference>
<dbReference type="GO" id="GO:0042254">
    <property type="term" value="P:ribosome biogenesis"/>
    <property type="evidence" value="ECO:0007669"/>
    <property type="project" value="UniProtKB-UniRule"/>
</dbReference>
<dbReference type="CDD" id="cd01898">
    <property type="entry name" value="Obg"/>
    <property type="match status" value="1"/>
</dbReference>
<dbReference type="FunFam" id="2.70.210.12:FF:000001">
    <property type="entry name" value="GTPase Obg"/>
    <property type="match status" value="1"/>
</dbReference>
<dbReference type="Gene3D" id="3.30.300.350">
    <property type="entry name" value="GTP-binding protein OBG, C-terminal domain"/>
    <property type="match status" value="1"/>
</dbReference>
<dbReference type="Gene3D" id="2.70.210.12">
    <property type="entry name" value="GTP1/OBG domain"/>
    <property type="match status" value="1"/>
</dbReference>
<dbReference type="Gene3D" id="3.40.50.300">
    <property type="entry name" value="P-loop containing nucleotide triphosphate hydrolases"/>
    <property type="match status" value="1"/>
</dbReference>
<dbReference type="HAMAP" id="MF_01454">
    <property type="entry name" value="GTPase_Obg"/>
    <property type="match status" value="1"/>
</dbReference>
<dbReference type="InterPro" id="IPR031167">
    <property type="entry name" value="G_OBG"/>
</dbReference>
<dbReference type="InterPro" id="IPR006073">
    <property type="entry name" value="GTP-bd"/>
</dbReference>
<dbReference type="InterPro" id="IPR014100">
    <property type="entry name" value="GTP-bd_Obg/CgtA"/>
</dbReference>
<dbReference type="InterPro" id="IPR036346">
    <property type="entry name" value="GTP-bd_prot_GTP1/OBG_C_sf"/>
</dbReference>
<dbReference type="InterPro" id="IPR006074">
    <property type="entry name" value="GTP1-OBG_CS"/>
</dbReference>
<dbReference type="InterPro" id="IPR006169">
    <property type="entry name" value="GTP1_OBG_dom"/>
</dbReference>
<dbReference type="InterPro" id="IPR036726">
    <property type="entry name" value="GTP1_OBG_dom_sf"/>
</dbReference>
<dbReference type="InterPro" id="IPR045086">
    <property type="entry name" value="OBG_GTPase"/>
</dbReference>
<dbReference type="InterPro" id="IPR015349">
    <property type="entry name" value="OCT_dom"/>
</dbReference>
<dbReference type="InterPro" id="IPR027417">
    <property type="entry name" value="P-loop_NTPase"/>
</dbReference>
<dbReference type="InterPro" id="IPR005225">
    <property type="entry name" value="Small_GTP-bd"/>
</dbReference>
<dbReference type="NCBIfam" id="TIGR02729">
    <property type="entry name" value="Obg_CgtA"/>
    <property type="match status" value="1"/>
</dbReference>
<dbReference type="NCBIfam" id="TIGR03595">
    <property type="entry name" value="Obg_CgtA_exten"/>
    <property type="match status" value="1"/>
</dbReference>
<dbReference type="NCBIfam" id="NF008954">
    <property type="entry name" value="PRK12296.1"/>
    <property type="match status" value="1"/>
</dbReference>
<dbReference type="NCBIfam" id="NF008955">
    <property type="entry name" value="PRK12297.1"/>
    <property type="match status" value="1"/>
</dbReference>
<dbReference type="NCBIfam" id="NF008956">
    <property type="entry name" value="PRK12299.1"/>
    <property type="match status" value="1"/>
</dbReference>
<dbReference type="NCBIfam" id="TIGR00231">
    <property type="entry name" value="small_GTP"/>
    <property type="match status" value="1"/>
</dbReference>
<dbReference type="PANTHER" id="PTHR11702">
    <property type="entry name" value="DEVELOPMENTALLY REGULATED GTP-BINDING PROTEIN-RELATED"/>
    <property type="match status" value="1"/>
</dbReference>
<dbReference type="PANTHER" id="PTHR11702:SF31">
    <property type="entry name" value="MITOCHONDRIAL RIBOSOME-ASSOCIATED GTPASE 2"/>
    <property type="match status" value="1"/>
</dbReference>
<dbReference type="Pfam" id="PF09269">
    <property type="entry name" value="DUF1967"/>
    <property type="match status" value="1"/>
</dbReference>
<dbReference type="Pfam" id="PF01018">
    <property type="entry name" value="GTP1_OBG"/>
    <property type="match status" value="1"/>
</dbReference>
<dbReference type="Pfam" id="PF01926">
    <property type="entry name" value="MMR_HSR1"/>
    <property type="match status" value="1"/>
</dbReference>
<dbReference type="PIRSF" id="PIRSF002401">
    <property type="entry name" value="GTP_bd_Obg/CgtA"/>
    <property type="match status" value="1"/>
</dbReference>
<dbReference type="PRINTS" id="PR00326">
    <property type="entry name" value="GTP1OBG"/>
</dbReference>
<dbReference type="SUPFAM" id="SSF102741">
    <property type="entry name" value="Obg GTP-binding protein C-terminal domain"/>
    <property type="match status" value="1"/>
</dbReference>
<dbReference type="SUPFAM" id="SSF82051">
    <property type="entry name" value="Obg GTP-binding protein N-terminal domain"/>
    <property type="match status" value="1"/>
</dbReference>
<dbReference type="SUPFAM" id="SSF52540">
    <property type="entry name" value="P-loop containing nucleoside triphosphate hydrolases"/>
    <property type="match status" value="1"/>
</dbReference>
<dbReference type="PROSITE" id="PS51710">
    <property type="entry name" value="G_OBG"/>
    <property type="match status" value="1"/>
</dbReference>
<dbReference type="PROSITE" id="PS00905">
    <property type="entry name" value="GTP1_OBG"/>
    <property type="match status" value="1"/>
</dbReference>
<dbReference type="PROSITE" id="PS51883">
    <property type="entry name" value="OBG"/>
    <property type="match status" value="1"/>
</dbReference>
<dbReference type="PROSITE" id="PS51881">
    <property type="entry name" value="OCT"/>
    <property type="match status" value="1"/>
</dbReference>